<evidence type="ECO:0000250" key="1">
    <source>
        <dbReference type="UniProtKB" id="P97584"/>
    </source>
</evidence>
<evidence type="ECO:0000250" key="2">
    <source>
        <dbReference type="UniProtKB" id="Q14914"/>
    </source>
</evidence>
<evidence type="ECO:0000250" key="3">
    <source>
        <dbReference type="UniProtKB" id="Q91YR9"/>
    </source>
</evidence>
<evidence type="ECO:0000250" key="4">
    <source>
        <dbReference type="UniProtKB" id="Q9EQZ5"/>
    </source>
</evidence>
<evidence type="ECO:0000269" key="5">
    <source>
    </source>
</evidence>
<evidence type="ECO:0000269" key="6">
    <source>
    </source>
</evidence>
<evidence type="ECO:0000269" key="7">
    <source>
    </source>
</evidence>
<evidence type="ECO:0000269" key="8">
    <source>
    </source>
</evidence>
<evidence type="ECO:0000269" key="9">
    <source>
    </source>
</evidence>
<evidence type="ECO:0000303" key="10">
    <source>
    </source>
</evidence>
<evidence type="ECO:0000303" key="11">
    <source>
    </source>
</evidence>
<evidence type="ECO:0000305" key="12"/>
<evidence type="ECO:0000305" key="13">
    <source>
    </source>
</evidence>
<evidence type="ECO:0000305" key="14">
    <source>
    </source>
</evidence>
<evidence type="ECO:0000305" key="15">
    <source>
    </source>
</evidence>
<evidence type="ECO:0000305" key="16">
    <source>
    </source>
</evidence>
<evidence type="ECO:0000305" key="17">
    <source>
    </source>
</evidence>
<feature type="chain" id="PRO_0000218067" description="Prostaglandin reductase 1">
    <location>
        <begin position="1"/>
        <end position="329"/>
    </location>
</feature>
<feature type="binding site" evidence="2">
    <location>
        <begin position="152"/>
        <end position="155"/>
    </location>
    <ligand>
        <name>NADP(+)</name>
        <dbReference type="ChEBI" id="CHEBI:58349"/>
    </ligand>
</feature>
<feature type="binding site" evidence="2">
    <location>
        <position position="178"/>
    </location>
    <ligand>
        <name>NADP(+)</name>
        <dbReference type="ChEBI" id="CHEBI:58349"/>
    </ligand>
</feature>
<feature type="binding site" evidence="2">
    <location>
        <position position="193"/>
    </location>
    <ligand>
        <name>NADP(+)</name>
        <dbReference type="ChEBI" id="CHEBI:58349"/>
    </ligand>
</feature>
<feature type="binding site" evidence="2">
    <location>
        <position position="217"/>
    </location>
    <ligand>
        <name>NADP(+)</name>
        <dbReference type="ChEBI" id="CHEBI:58349"/>
    </ligand>
</feature>
<feature type="binding site" evidence="2">
    <location>
        <begin position="239"/>
        <end position="245"/>
    </location>
    <ligand>
        <name>NADP(+)</name>
        <dbReference type="ChEBI" id="CHEBI:58349"/>
    </ligand>
</feature>
<feature type="binding site" evidence="2">
    <location>
        <begin position="270"/>
        <end position="272"/>
    </location>
    <ligand>
        <name>NADP(+)</name>
        <dbReference type="ChEBI" id="CHEBI:58349"/>
    </ligand>
</feature>
<feature type="binding site" evidence="2">
    <location>
        <position position="321"/>
    </location>
    <ligand>
        <name>NADP(+)</name>
        <dbReference type="ChEBI" id="CHEBI:58349"/>
    </ligand>
</feature>
<feature type="modified residue" description="Phosphothreonine" evidence="2">
    <location>
        <position position="18"/>
    </location>
</feature>
<feature type="modified residue" description="Phosphoserine" evidence="2">
    <location>
        <position position="20"/>
    </location>
</feature>
<feature type="modified residue" description="N6-(2-hydroxyisobutyryl)lysine; alternate" evidence="2">
    <location>
        <position position="178"/>
    </location>
</feature>
<feature type="modified residue" description="N6-acetyllysine; alternate" evidence="3">
    <location>
        <position position="178"/>
    </location>
</feature>
<feature type="mutagenesis site" description="Reduces activity by 90%." evidence="8">
    <original>A</original>
    <variation>E</variation>
    <location>
        <position position="149"/>
    </location>
</feature>
<feature type="mutagenesis site" description="Reduces activity by half." evidence="8">
    <original>A</original>
    <variation>V</variation>
    <location>
        <position position="149"/>
    </location>
</feature>
<feature type="mutagenesis site" description="No effect." evidence="8">
    <original>A</original>
    <variation>V</variation>
    <location>
        <position position="150"/>
    </location>
</feature>
<feature type="mutagenesis site" description="Loss of activity." evidence="8">
    <original>G</original>
    <variation>V</variation>
    <location>
        <position position="152"/>
    </location>
</feature>
<feature type="mutagenesis site" description="Reduces activity by 99%." evidence="8">
    <original>G</original>
    <variation>V</variation>
    <location>
        <position position="155"/>
    </location>
</feature>
<feature type="mutagenesis site" description="Reduces activity by 60%." evidence="8">
    <original>G</original>
    <variation>V</variation>
    <location>
        <position position="159"/>
    </location>
</feature>
<feature type="mutagenesis site" description="Reduces activity by 99%." evidence="8">
    <original>G</original>
    <variation>V</variation>
    <location>
        <position position="166"/>
    </location>
</feature>
<feature type="sequence conflict" description="In Ref. 2; AAC39170." evidence="12" ref="2">
    <original>T</original>
    <variation>A</variation>
    <location>
        <position position="118"/>
    </location>
</feature>
<gene>
    <name type="primary">PTGR1</name>
    <name type="synonym">LTB4DH</name>
</gene>
<proteinExistence type="evidence at protein level"/>
<keyword id="KW-0007">Acetylation</keyword>
<keyword id="KW-0963">Cytoplasm</keyword>
<keyword id="KW-0903">Direct protein sequencing</keyword>
<keyword id="KW-0276">Fatty acid metabolism</keyword>
<keyword id="KW-0379">Hydroxylation</keyword>
<keyword id="KW-0443">Lipid metabolism</keyword>
<keyword id="KW-0520">NAD</keyword>
<keyword id="KW-0521">NADP</keyword>
<keyword id="KW-0560">Oxidoreductase</keyword>
<keyword id="KW-0597">Phosphoprotein</keyword>
<keyword id="KW-0644">Prostaglandin metabolism</keyword>
<keyword id="KW-1185">Reference proteome</keyword>
<reference key="1">
    <citation type="journal article" date="1996" name="J. Biol. Chem.">
        <title>cDNA cloning, expression, and mutagenesis study of leukotriene B4 12-hydroxydehydrogenase.</title>
        <authorList>
            <person name="Yokomizo T."/>
            <person name="Ogawa Y."/>
            <person name="Uozumi N."/>
            <person name="Kume K."/>
            <person name="Izumi T."/>
            <person name="Shimizu T."/>
        </authorList>
    </citation>
    <scope>NUCLEOTIDE SEQUENCE [MRNA]</scope>
    <scope>PARTIAL PROTEIN SEQUENCE</scope>
    <scope>FUNCTION</scope>
    <scope>CATALYTIC ACTIVITY</scope>
    <scope>MUTAGENESIS OF ALA-149; ALA-150; GLY-152; GLY-155; GLY-159 AND GLY-166</scope>
    <source>
        <tissue>Kidney</tissue>
    </source>
</reference>
<reference key="2">
    <citation type="journal article" date="1998" name="Biochem. J.">
        <title>Purification, cDNA cloning and expression of 15-oxoprostaglandin 13-reductase from pig lung.</title>
        <authorList>
            <person name="Ensor C.M."/>
            <person name="Zhang H."/>
            <person name="Tai H.-H."/>
        </authorList>
    </citation>
    <scope>NUCLEOTIDE SEQUENCE [MRNA]</scope>
    <scope>PARTIAL PROTEIN SEQUENCE</scope>
    <scope>FUNCTION</scope>
    <scope>CATALYTIC ACTIVITY</scope>
    <scope>BIOPHYSICOCHEMICAL PROPERTIES</scope>
    <source>
        <tissue>Lung</tissue>
    </source>
</reference>
<reference key="3">
    <citation type="journal article" date="1993" name="J. Biol. Chem.">
        <title>Enzymatic inactivation of leukotriene B4 by a novel enzyme found in the porcine kidney. Purification and properties of leukotriene B4 12-hydroxydehydrogenase.</title>
        <authorList>
            <person name="Yokomizo T."/>
            <person name="Izumi T."/>
            <person name="Takahashi T."/>
            <person name="Kasama T."/>
            <person name="Kobayashi Y."/>
            <person name="Sato F."/>
            <person name="Taketani Y."/>
            <person name="Shimizu T."/>
        </authorList>
    </citation>
    <scope>CHARACTERIZATION</scope>
    <scope>PROTEIN SEQUENCE OF 1-15</scope>
    <scope>FUNCTION</scope>
    <scope>CATALYTIC ACTIVITY</scope>
    <scope>BIOPHYSICOCHEMICAL PROPERTIES</scope>
    <scope>SUBCELLULAR LOCATION</scope>
    <source>
        <tissue>Kidney</tissue>
    </source>
</reference>
<reference key="4">
    <citation type="journal article" date="2000" name="J. Biol. Chem.">
        <title>Oxidoreductases in lipoxin A4 metabolic inactivation: a novel role for 15-onoprostaglandin 13-reductase/leukotriene B4 12-hydroxydehydrogenase in inflammation.</title>
        <authorList>
            <person name="Clish C.B."/>
            <person name="Levy B.D."/>
            <person name="Chiang N."/>
            <person name="Tai H.-H."/>
            <person name="Serhan C.N."/>
        </authorList>
    </citation>
    <scope>FUNCTION</scope>
    <scope>CATALYTIC ACTIVITY</scope>
</reference>
<reference key="5">
    <citation type="journal article" date="2001" name="Biochem. Biophys. Res. Commun.">
        <title>Identification of dual cyclooxygenase-eicosanoid oxidoreductase inhibitors: NSAIDs that inhibit PG-LX reductase/LTB(4) dehydrogenase.</title>
        <authorList>
            <person name="Clish C.B."/>
            <person name="Sun Y.P."/>
            <person name="Serhan C.N."/>
        </authorList>
    </citation>
    <scope>FUNCTION</scope>
    <scope>CATALYTIC ACTIVITY</scope>
    <scope>ACTIVITY REGULATION</scope>
</reference>
<dbReference type="EC" id="1.3.1.48" evidence="9"/>
<dbReference type="EC" id="1.3.1.74" evidence="2"/>
<dbReference type="EMBL" id="D49386">
    <property type="protein sequence ID" value="BAA08381.1"/>
    <property type="molecule type" value="mRNA"/>
</dbReference>
<dbReference type="EMBL" id="U87622">
    <property type="protein sequence ID" value="AAC39170.1"/>
    <property type="molecule type" value="mRNA"/>
</dbReference>
<dbReference type="PIR" id="A47421">
    <property type="entry name" value="A47421"/>
</dbReference>
<dbReference type="RefSeq" id="NP_999550.1">
    <property type="nucleotide sequence ID" value="NM_214385.1"/>
</dbReference>
<dbReference type="SMR" id="Q29073"/>
<dbReference type="FunCoup" id="Q29073">
    <property type="interactions" value="400"/>
</dbReference>
<dbReference type="STRING" id="9823.ENSSSCP00000039006"/>
<dbReference type="SwissLipids" id="SLP:000000733"/>
<dbReference type="GlyGen" id="Q29073">
    <property type="glycosylation" value="1 site"/>
</dbReference>
<dbReference type="PaxDb" id="9823-ENSSSCP00000023451"/>
<dbReference type="PeptideAtlas" id="Q29073"/>
<dbReference type="Ensembl" id="ENSSSCT00035022658.1">
    <property type="protein sequence ID" value="ENSSSCP00035008340.1"/>
    <property type="gene ID" value="ENSSSCG00035017612.1"/>
</dbReference>
<dbReference type="Ensembl" id="ENSSSCT00070044298.1">
    <property type="protein sequence ID" value="ENSSSCP00070037326.1"/>
    <property type="gene ID" value="ENSSSCG00070022262.1"/>
</dbReference>
<dbReference type="Ensembl" id="ENSSSCT00070044304.1">
    <property type="protein sequence ID" value="ENSSSCP00070037331.1"/>
    <property type="gene ID" value="ENSSSCG00070022262.1"/>
</dbReference>
<dbReference type="Ensembl" id="ENSSSCT00070044312.1">
    <property type="protein sequence ID" value="ENSSSCP00070037338.1"/>
    <property type="gene ID" value="ENSSSCG00070022262.1"/>
</dbReference>
<dbReference type="Ensembl" id="ENSSSCT00070044338.1">
    <property type="protein sequence ID" value="ENSSSCP00070037361.1"/>
    <property type="gene ID" value="ENSSSCG00070022262.1"/>
</dbReference>
<dbReference type="Ensembl" id="ENSSSCT00070044343.1">
    <property type="protein sequence ID" value="ENSSSCP00070037366.1"/>
    <property type="gene ID" value="ENSSSCG00070022262.1"/>
</dbReference>
<dbReference type="Ensembl" id="ENSSSCT00105062855">
    <property type="protein sequence ID" value="ENSSSCP00105044672"/>
    <property type="gene ID" value="ENSSSCG00105033034"/>
</dbReference>
<dbReference type="Ensembl" id="ENSSSCT00110010443">
    <property type="protein sequence ID" value="ENSSSCP00110007393"/>
    <property type="gene ID" value="ENSSSCG00110005300"/>
</dbReference>
<dbReference type="Ensembl" id="ENSSSCT00115012476">
    <property type="protein sequence ID" value="ENSSSCP00115011785"/>
    <property type="gene ID" value="ENSSSCG00115007164"/>
</dbReference>
<dbReference type="Ensembl" id="ENSSSCT00130053529">
    <property type="protein sequence ID" value="ENSSSCP00130038178"/>
    <property type="gene ID" value="ENSSSCG00130027481"/>
</dbReference>
<dbReference type="GeneID" id="397678"/>
<dbReference type="KEGG" id="ssc:397678"/>
<dbReference type="CTD" id="22949"/>
<dbReference type="eggNOG" id="KOG1196">
    <property type="taxonomic scope" value="Eukaryota"/>
</dbReference>
<dbReference type="InParanoid" id="Q29073"/>
<dbReference type="OrthoDB" id="809632at2759"/>
<dbReference type="BRENDA" id="1.3.1.48">
    <property type="organism ID" value="6170"/>
</dbReference>
<dbReference type="Proteomes" id="UP000008227">
    <property type="component" value="Unplaced"/>
</dbReference>
<dbReference type="Proteomes" id="UP000314985">
    <property type="component" value="Chromosome 1"/>
</dbReference>
<dbReference type="Proteomes" id="UP000694570">
    <property type="component" value="Unplaced"/>
</dbReference>
<dbReference type="Proteomes" id="UP000694571">
    <property type="component" value="Unplaced"/>
</dbReference>
<dbReference type="Proteomes" id="UP000694720">
    <property type="component" value="Unplaced"/>
</dbReference>
<dbReference type="Proteomes" id="UP000694722">
    <property type="component" value="Unplaced"/>
</dbReference>
<dbReference type="Proteomes" id="UP000694723">
    <property type="component" value="Unplaced"/>
</dbReference>
<dbReference type="Proteomes" id="UP000694724">
    <property type="component" value="Unplaced"/>
</dbReference>
<dbReference type="Proteomes" id="UP000694725">
    <property type="component" value="Unplaced"/>
</dbReference>
<dbReference type="Proteomes" id="UP000694726">
    <property type="component" value="Unplaced"/>
</dbReference>
<dbReference type="Proteomes" id="UP000694727">
    <property type="component" value="Unplaced"/>
</dbReference>
<dbReference type="Proteomes" id="UP000694728">
    <property type="component" value="Unplaced"/>
</dbReference>
<dbReference type="GO" id="GO:0005737">
    <property type="term" value="C:cytoplasm"/>
    <property type="evidence" value="ECO:0000314"/>
    <property type="project" value="UniProtKB"/>
</dbReference>
<dbReference type="GO" id="GO:0005829">
    <property type="term" value="C:cytosol"/>
    <property type="evidence" value="ECO:0000304"/>
    <property type="project" value="Reactome"/>
</dbReference>
<dbReference type="GO" id="GO:0036185">
    <property type="term" value="F:13-lipoxin reductase activity"/>
    <property type="evidence" value="ECO:0000314"/>
    <property type="project" value="UniProtKB"/>
</dbReference>
<dbReference type="GO" id="GO:0047522">
    <property type="term" value="F:15-oxoprostaglandin 13-oxidase [NAD(P)+] activity"/>
    <property type="evidence" value="ECO:0000314"/>
    <property type="project" value="UniProtKB"/>
</dbReference>
<dbReference type="GO" id="GO:0035798">
    <property type="term" value="F:2-alkenal reductase (NADPH) activity"/>
    <property type="evidence" value="ECO:0000250"/>
    <property type="project" value="UniProtKB"/>
</dbReference>
<dbReference type="GO" id="GO:0097257">
    <property type="term" value="F:leukotriene B4 12-hydroxy dehydrogenase activity"/>
    <property type="evidence" value="ECO:0000314"/>
    <property type="project" value="UniProtKB"/>
</dbReference>
<dbReference type="GO" id="GO:0036102">
    <property type="term" value="P:leukotriene B4 metabolic process"/>
    <property type="evidence" value="ECO:0000314"/>
    <property type="project" value="UniProtKB"/>
</dbReference>
<dbReference type="GO" id="GO:2001302">
    <property type="term" value="P:lipoxin A4 metabolic process"/>
    <property type="evidence" value="ECO:0000314"/>
    <property type="project" value="UniProtKB"/>
</dbReference>
<dbReference type="GO" id="GO:0006693">
    <property type="term" value="P:prostaglandin metabolic process"/>
    <property type="evidence" value="ECO:0000314"/>
    <property type="project" value="UniProtKB"/>
</dbReference>
<dbReference type="CDD" id="cd08294">
    <property type="entry name" value="leukotriene_B4_DH_like"/>
    <property type="match status" value="1"/>
</dbReference>
<dbReference type="FunFam" id="3.40.50.720:FF:000121">
    <property type="entry name" value="Prostaglandin reductase 2"/>
    <property type="match status" value="1"/>
</dbReference>
<dbReference type="Gene3D" id="3.90.180.10">
    <property type="entry name" value="Medium-chain alcohol dehydrogenases, catalytic domain"/>
    <property type="match status" value="1"/>
</dbReference>
<dbReference type="Gene3D" id="3.40.50.720">
    <property type="entry name" value="NAD(P)-binding Rossmann-like Domain"/>
    <property type="match status" value="1"/>
</dbReference>
<dbReference type="InterPro" id="IPR013149">
    <property type="entry name" value="ADH-like_C"/>
</dbReference>
<dbReference type="InterPro" id="IPR041694">
    <property type="entry name" value="ADH_N_2"/>
</dbReference>
<dbReference type="InterPro" id="IPR011032">
    <property type="entry name" value="GroES-like_sf"/>
</dbReference>
<dbReference type="InterPro" id="IPR045010">
    <property type="entry name" value="MDR_fam"/>
</dbReference>
<dbReference type="InterPro" id="IPR036291">
    <property type="entry name" value="NAD(P)-bd_dom_sf"/>
</dbReference>
<dbReference type="InterPro" id="IPR020843">
    <property type="entry name" value="PKS_ER"/>
</dbReference>
<dbReference type="InterPro" id="IPR014190">
    <property type="entry name" value="PTGR1"/>
</dbReference>
<dbReference type="NCBIfam" id="TIGR02825">
    <property type="entry name" value="B4_12hDH"/>
    <property type="match status" value="1"/>
</dbReference>
<dbReference type="PANTHER" id="PTHR43205">
    <property type="entry name" value="PROSTAGLANDIN REDUCTASE"/>
    <property type="match status" value="1"/>
</dbReference>
<dbReference type="PANTHER" id="PTHR43205:SF7">
    <property type="entry name" value="PROSTAGLANDIN REDUCTASE 1"/>
    <property type="match status" value="1"/>
</dbReference>
<dbReference type="Pfam" id="PF16884">
    <property type="entry name" value="ADH_N_2"/>
    <property type="match status" value="1"/>
</dbReference>
<dbReference type="Pfam" id="PF00107">
    <property type="entry name" value="ADH_zinc_N"/>
    <property type="match status" value="1"/>
</dbReference>
<dbReference type="SMART" id="SM00829">
    <property type="entry name" value="PKS_ER"/>
    <property type="match status" value="1"/>
</dbReference>
<dbReference type="SUPFAM" id="SSF50129">
    <property type="entry name" value="GroES-like"/>
    <property type="match status" value="2"/>
</dbReference>
<dbReference type="SUPFAM" id="SSF51735">
    <property type="entry name" value="NAD(P)-binding Rossmann-fold domains"/>
    <property type="match status" value="1"/>
</dbReference>
<organism>
    <name type="scientific">Sus scrofa</name>
    <name type="common">Pig</name>
    <dbReference type="NCBI Taxonomy" id="9823"/>
    <lineage>
        <taxon>Eukaryota</taxon>
        <taxon>Metazoa</taxon>
        <taxon>Chordata</taxon>
        <taxon>Craniata</taxon>
        <taxon>Vertebrata</taxon>
        <taxon>Euteleostomi</taxon>
        <taxon>Mammalia</taxon>
        <taxon>Eutheria</taxon>
        <taxon>Laurasiatheria</taxon>
        <taxon>Artiodactyla</taxon>
        <taxon>Suina</taxon>
        <taxon>Suidae</taxon>
        <taxon>Sus</taxon>
    </lineage>
</organism>
<name>PTGR1_PIG</name>
<sequence length="329" mass="35762">MVRAKSWTLKKHFVGYPTPSNFELKTVELPPLKNGEVLLEALFLTVDPYMRIAARKLKEGDMMMGEQVARVIESKNAAFPTGTIVVALLGWTTHSISDGKNLERLLAEWPDTLPLSLTLGTVGMPGLTAYFGLLDICGLKGGETVMVNAAAGAVGSVVGQIAKLKGCKVVGAAGSDEKVACLKKYGFDVAFNYKTIESLEETLKKASPEGYDCYFDNVGGEFSNAVTSQMKKFGRIAICGAISTYNRTGPPPPGPPPEVVIYNELCFQGFIVTRWQGEVRQKALRDLLKWVSEGKIQYHEHITEGFENMPAAFMGMLKGENLGKAIVKA</sequence>
<comment type="function">
    <text evidence="1 2 5 6 7 8 9">NAD(P)H-dependent oxidoreductase involved in metabolic inactivation of pro- and anti-inflammatory eicosanoids: prostaglandins (PG), leukotrienes (LT) and lipoxins (LX) (PubMed:10837478, PubMed:11688989, PubMed:8576264, PubMed:9461497). Preferentially uses NADPH over NADH as cofactor (PubMed:9461497). Catalyzes with high efficiency the reduction of the 13,14 double bond of 15-oxoPGs, including 15-oxo-PGE1, 15-oxo-PGE2, 15-oxo-PGF1-alpha and 15-oxo-PGF2-alpha (PubMed:11688989, PubMed:9461497). Catalyzes with lower efficiency the oxidation of the hydroxyl group at C12 of LTB4 and its derivatives, converting them into biologically less active 12-oxo-LTB4 metabolites (PubMed:8394361, PubMed:8576264). Reduces 15-oxo-LXA4 to 13,14 dihydro-15-oxo-LXA4 and may promote neutrophil recruitment at the inflammatory site (PubMed:10837478, PubMed:11688989). Plays a role in metabolic detoxification of alkenals and ketones. Reduces alpha,beta-unsaturated alkenals and ketones, particularly those with medium-chain length, showing highest affinity toward (2E)-decenal and (3E)-3-nonen-2-one (By similarity). May inactivate 4-hydroxy-2-nonenal, a cytotoxic lipid constituent of oxidized low-density lipoprotein particles (By similarity).</text>
</comment>
<comment type="catalytic activity">
    <reaction evidence="9">
        <text>13,14-dihydro-15-oxo-prostaglandin E1 + NADP(+) = 15-oxoprostaglandin E1 + NADPH + H(+)</text>
        <dbReference type="Rhea" id="RHEA:50584"/>
        <dbReference type="ChEBI" id="CHEBI:15378"/>
        <dbReference type="ChEBI" id="CHEBI:57401"/>
        <dbReference type="ChEBI" id="CHEBI:57783"/>
        <dbReference type="ChEBI" id="CHEBI:58349"/>
        <dbReference type="ChEBI" id="CHEBI:133408"/>
    </reaction>
    <physiologicalReaction direction="right-to-left" evidence="17">
        <dbReference type="Rhea" id="RHEA:50586"/>
    </physiologicalReaction>
</comment>
<comment type="catalytic activity">
    <reaction evidence="9">
        <text>13,14-dihydro-15-oxo-prostaglandin E2 + NADP(+) = 15-oxoprostaglandin E2 + NADPH + H(+)</text>
        <dbReference type="Rhea" id="RHEA:11912"/>
        <dbReference type="ChEBI" id="CHEBI:15378"/>
        <dbReference type="ChEBI" id="CHEBI:57400"/>
        <dbReference type="ChEBI" id="CHEBI:57402"/>
        <dbReference type="ChEBI" id="CHEBI:57783"/>
        <dbReference type="ChEBI" id="CHEBI:58349"/>
        <dbReference type="EC" id="1.3.1.48"/>
    </reaction>
    <physiologicalReaction direction="right-to-left" evidence="17">
        <dbReference type="Rhea" id="RHEA:11914"/>
    </physiologicalReaction>
</comment>
<comment type="catalytic activity">
    <reaction evidence="6 9">
        <text>13,14-dihydro-15-oxo-prostaglandin E2 + NAD(+) = 15-oxoprostaglandin E2 + NADH + H(+)</text>
        <dbReference type="Rhea" id="RHEA:11916"/>
        <dbReference type="ChEBI" id="CHEBI:15378"/>
        <dbReference type="ChEBI" id="CHEBI:57400"/>
        <dbReference type="ChEBI" id="CHEBI:57402"/>
        <dbReference type="ChEBI" id="CHEBI:57540"/>
        <dbReference type="ChEBI" id="CHEBI:57945"/>
        <dbReference type="EC" id="1.3.1.48"/>
    </reaction>
    <physiologicalReaction direction="right-to-left" evidence="14 17">
        <dbReference type="Rhea" id="RHEA:11918"/>
    </physiologicalReaction>
</comment>
<comment type="catalytic activity">
    <reaction evidence="2">
        <text>13,14-dihydro-15-oxo-prostaglandin F1alpha + NADP(+) = 15-oxoprostaglandin F1alpha + NADPH + H(+)</text>
        <dbReference type="Rhea" id="RHEA:50592"/>
        <dbReference type="ChEBI" id="CHEBI:15378"/>
        <dbReference type="ChEBI" id="CHEBI:57783"/>
        <dbReference type="ChEBI" id="CHEBI:58349"/>
        <dbReference type="ChEBI" id="CHEBI:79072"/>
        <dbReference type="ChEBI" id="CHEBI:133411"/>
    </reaction>
    <physiologicalReaction direction="right-to-left" evidence="2">
        <dbReference type="Rhea" id="RHEA:50594"/>
    </physiologicalReaction>
</comment>
<comment type="catalytic activity">
    <reaction evidence="9">
        <text>13,14-dihydro-15-oxo-PGF2alpha + NADP(+) = 15-oxoprostaglandin F2alpha + NADPH + H(+)</text>
        <dbReference type="Rhea" id="RHEA:50588"/>
        <dbReference type="ChEBI" id="CHEBI:15378"/>
        <dbReference type="ChEBI" id="CHEBI:57783"/>
        <dbReference type="ChEBI" id="CHEBI:58349"/>
        <dbReference type="ChEBI" id="CHEBI:133374"/>
        <dbReference type="ChEBI" id="CHEBI:133409"/>
    </reaction>
    <physiologicalReaction direction="right-to-left" evidence="17">
        <dbReference type="Rhea" id="RHEA:50590"/>
    </physiologicalReaction>
</comment>
<comment type="catalytic activity">
    <reaction evidence="7 8">
        <text>leukotriene B4 + NADP(+) = 12-oxo-leukotriene B4 + NADPH + H(+)</text>
        <dbReference type="Rhea" id="RHEA:50608"/>
        <dbReference type="ChEBI" id="CHEBI:15378"/>
        <dbReference type="ChEBI" id="CHEBI:57461"/>
        <dbReference type="ChEBI" id="CHEBI:57783"/>
        <dbReference type="ChEBI" id="CHEBI:58349"/>
        <dbReference type="ChEBI" id="CHEBI:133309"/>
    </reaction>
    <physiologicalReaction direction="left-to-right" evidence="15 16">
        <dbReference type="Rhea" id="RHEA:50609"/>
    </physiologicalReaction>
</comment>
<comment type="catalytic activity">
    <reaction evidence="7">
        <text>20-hydroxy-leukotriene B4 + NADP(+) = 12-oxo-20-hydroxy-leukotriene B4 + NADPH + H(+)</text>
        <dbReference type="Rhea" id="RHEA:51208"/>
        <dbReference type="ChEBI" id="CHEBI:15378"/>
        <dbReference type="ChEBI" id="CHEBI:57460"/>
        <dbReference type="ChEBI" id="CHEBI:57783"/>
        <dbReference type="ChEBI" id="CHEBI:58349"/>
        <dbReference type="ChEBI" id="CHEBI:133346"/>
    </reaction>
    <physiologicalReaction direction="left-to-right" evidence="15">
        <dbReference type="Rhea" id="RHEA:51209"/>
    </physiologicalReaction>
</comment>
<comment type="catalytic activity">
    <reaction evidence="7">
        <text>6-trans-leukotriene B4 + NADP(+) = 12-oxo-(5S)-hydroxy-(6E,8E,10E,14Z)-eicosatetraenoate + NADPH + H(+)</text>
        <dbReference type="Rhea" id="RHEA:51204"/>
        <dbReference type="ChEBI" id="CHEBI:15378"/>
        <dbReference type="ChEBI" id="CHEBI:57783"/>
        <dbReference type="ChEBI" id="CHEBI:58349"/>
        <dbReference type="ChEBI" id="CHEBI:90723"/>
        <dbReference type="ChEBI" id="CHEBI:133974"/>
    </reaction>
    <physiologicalReaction direction="left-to-right" evidence="15">
        <dbReference type="Rhea" id="RHEA:51205"/>
    </physiologicalReaction>
</comment>
<comment type="catalytic activity">
    <reaction evidence="7">
        <text>(5S,12S)-dihydroxy-(6E,10E,12E,14Z)-eicosatetraenoate + NADP(+) = 12-oxo-(5S)-hydroxy-(6E,8E,10E,14Z)-eicosatetraenoate + NADPH + H(+)</text>
        <dbReference type="Rhea" id="RHEA:51212"/>
        <dbReference type="ChEBI" id="CHEBI:15378"/>
        <dbReference type="ChEBI" id="CHEBI:57783"/>
        <dbReference type="ChEBI" id="CHEBI:58349"/>
        <dbReference type="ChEBI" id="CHEBI:133974"/>
        <dbReference type="ChEBI" id="CHEBI:133975"/>
    </reaction>
    <physiologicalReaction direction="left-to-right" evidence="15">
        <dbReference type="Rhea" id="RHEA:51213"/>
    </physiologicalReaction>
</comment>
<comment type="catalytic activity">
    <reaction evidence="5 6">
        <text>15-oxo-(5S,6R)-dihydroxy-(7E,9E,11Z,13E)-eicosatetraenoate + NADH + H(+) = 15-oxo-(5S,6R)-dihydroxy-(7E,9E,11Z)-eicosatrienoate + NAD(+)</text>
        <dbReference type="Rhea" id="RHEA:41592"/>
        <dbReference type="ChEBI" id="CHEBI:15378"/>
        <dbReference type="ChEBI" id="CHEBI:57540"/>
        <dbReference type="ChEBI" id="CHEBI:57945"/>
        <dbReference type="ChEBI" id="CHEBI:78311"/>
        <dbReference type="ChEBI" id="CHEBI:78325"/>
    </reaction>
    <physiologicalReaction direction="left-to-right" evidence="13 14">
        <dbReference type="Rhea" id="RHEA:41593"/>
    </physiologicalReaction>
</comment>
<comment type="catalytic activity">
    <reaction evidence="2">
        <text>an n-alkanal + NADP(+) = an alk-2-enal + NADPH + H(+)</text>
        <dbReference type="Rhea" id="RHEA:13737"/>
        <dbReference type="ChEBI" id="CHEBI:12834"/>
        <dbReference type="ChEBI" id="CHEBI:13757"/>
        <dbReference type="ChEBI" id="CHEBI:15378"/>
        <dbReference type="ChEBI" id="CHEBI:57783"/>
        <dbReference type="ChEBI" id="CHEBI:58349"/>
        <dbReference type="EC" id="1.3.1.74"/>
    </reaction>
    <physiologicalReaction direction="right-to-left" evidence="2">
        <dbReference type="Rhea" id="RHEA:13739"/>
    </physiologicalReaction>
</comment>
<comment type="catalytic activity">
    <reaction evidence="2">
        <text>hexanal + NADP(+) = (E)-hex-2-enal + NADPH + H(+)</text>
        <dbReference type="Rhea" id="RHEA:50776"/>
        <dbReference type="ChEBI" id="CHEBI:15378"/>
        <dbReference type="ChEBI" id="CHEBI:28913"/>
        <dbReference type="ChEBI" id="CHEBI:57783"/>
        <dbReference type="ChEBI" id="CHEBI:58349"/>
        <dbReference type="ChEBI" id="CHEBI:88528"/>
    </reaction>
    <physiologicalReaction direction="right-to-left" evidence="2">
        <dbReference type="Rhea" id="RHEA:50778"/>
    </physiologicalReaction>
</comment>
<comment type="catalytic activity">
    <reaction evidence="2">
        <text>octanal + NADP(+) = (2E)-octenal + NADPH + H(+)</text>
        <dbReference type="Rhea" id="RHEA:50780"/>
        <dbReference type="ChEBI" id="CHEBI:15378"/>
        <dbReference type="ChEBI" id="CHEBI:17935"/>
        <dbReference type="ChEBI" id="CHEBI:57783"/>
        <dbReference type="ChEBI" id="CHEBI:58349"/>
        <dbReference type="ChEBI" id="CHEBI:61748"/>
    </reaction>
    <physiologicalReaction direction="right-to-left" evidence="2">
        <dbReference type="Rhea" id="RHEA:50782"/>
    </physiologicalReaction>
</comment>
<comment type="catalytic activity">
    <reaction evidence="2">
        <text>decanal + NADP(+) = (2E)-decenal + NADPH + H(+)</text>
        <dbReference type="Rhea" id="RHEA:50612"/>
        <dbReference type="ChEBI" id="CHEBI:15378"/>
        <dbReference type="ChEBI" id="CHEBI:31457"/>
        <dbReference type="ChEBI" id="CHEBI:57783"/>
        <dbReference type="ChEBI" id="CHEBI:58349"/>
        <dbReference type="ChEBI" id="CHEBI:133455"/>
    </reaction>
    <physiologicalReaction direction="right-to-left" evidence="2">
        <dbReference type="Rhea" id="RHEA:50614"/>
    </physiologicalReaction>
</comment>
<comment type="catalytic activity">
    <reaction evidence="2">
        <text>dodecanal + NADP(+) = (2E)-dodecenal + NADPH + H(+)</text>
        <dbReference type="Rhea" id="RHEA:50784"/>
        <dbReference type="ChEBI" id="CHEBI:15378"/>
        <dbReference type="ChEBI" id="CHEBI:27836"/>
        <dbReference type="ChEBI" id="CHEBI:57783"/>
        <dbReference type="ChEBI" id="CHEBI:58349"/>
        <dbReference type="ChEBI" id="CHEBI:133741"/>
    </reaction>
    <physiologicalReaction direction="right-to-left" evidence="2">
        <dbReference type="Rhea" id="RHEA:50786"/>
    </physiologicalReaction>
</comment>
<comment type="catalytic activity">
    <reaction evidence="1">
        <text>4-hydroxynonanal + NADP(+) = (E)-4-hydroxynon-2-enal + NADPH + H(+)</text>
        <dbReference type="Rhea" id="RHEA:64736"/>
        <dbReference type="ChEBI" id="CHEBI:15378"/>
        <dbReference type="ChEBI" id="CHEBI:57783"/>
        <dbReference type="ChEBI" id="CHEBI:58349"/>
        <dbReference type="ChEBI" id="CHEBI:58968"/>
        <dbReference type="ChEBI" id="CHEBI:156112"/>
    </reaction>
    <physiologicalReaction direction="right-to-left" evidence="1">
        <dbReference type="Rhea" id="RHEA:64738"/>
    </physiologicalReaction>
</comment>
<comment type="catalytic activity">
    <reaction evidence="2">
        <text>pentan-2-one + NADP(+) = (E)-pent-3-en-2-one + NADPH + H(+)</text>
        <dbReference type="Rhea" id="RHEA:50788"/>
        <dbReference type="ChEBI" id="CHEBI:15378"/>
        <dbReference type="ChEBI" id="CHEBI:16472"/>
        <dbReference type="ChEBI" id="CHEBI:57783"/>
        <dbReference type="ChEBI" id="CHEBI:58349"/>
        <dbReference type="ChEBI" id="CHEBI:145276"/>
    </reaction>
    <physiologicalReaction direction="right-to-left" evidence="2">
        <dbReference type="Rhea" id="RHEA:50790"/>
    </physiologicalReaction>
</comment>
<comment type="catalytic activity">
    <reaction evidence="2">
        <text>nonan-2-one + NADP(+) = (3E)-nonen-2-one + NADPH + H(+)</text>
        <dbReference type="Rhea" id="RHEA:50616"/>
        <dbReference type="ChEBI" id="CHEBI:15378"/>
        <dbReference type="ChEBI" id="CHEBI:57783"/>
        <dbReference type="ChEBI" id="CHEBI:58349"/>
        <dbReference type="ChEBI" id="CHEBI:77927"/>
        <dbReference type="ChEBI" id="CHEBI:133457"/>
    </reaction>
    <physiologicalReaction direction="right-to-left" evidence="2">
        <dbReference type="Rhea" id="RHEA:50618"/>
    </physiologicalReaction>
</comment>
<comment type="activity regulation">
    <text evidence="6">Down-regulated by nonsteroidal anti-inflammatory drugs diclofenac, indomethacin and niflumic acid.</text>
</comment>
<comment type="biophysicochemical properties">
    <kinetics>
        <KM evidence="9">7.7 uM for 15-oxo-PGE1</KM>
        <KM evidence="9">19 uM for 15-oxo-PGE2</KM>
        <KM evidence="9">10 uM for LTB4</KM>
        <KM evidence="9">153 uM for NADH</KM>
        <KM evidence="9">15 uM for NADPH</KM>
        <KM evidence="7">8 uM for LTB4</KM>
        <KM evidence="7">14 uM for 6-trans-LTB4</KM>
        <KM evidence="7">1.5 uM for NADP(+)</KM>
        <Vmax evidence="9">2470.0 nmol/min/mg enzyme with 15-keto-PGE1 as substrate</Vmax>
        <Vmax evidence="9">847.0 nmol/min/mg enzyme with 15-keto-PGE2 as substrate</Vmax>
        <Vmax evidence="9">7.0 nmol/min/mg enzyme with LTB4 as substrate</Vmax>
        <Vmax evidence="9">2352.0 nmol/min/mg enzyme with NADH as substrate</Vmax>
        <Vmax evidence="9">729.0 nmol/min/mg enzyme with NADPH as substrate</Vmax>
        <Vmax evidence="7">8.0 nmol/min/mg enzyme with LTB4 as substrate</Vmax>
    </kinetics>
    <phDependence>
        <text evidence="7">Optimum pH is 7.5.</text>
    </phDependence>
</comment>
<comment type="subunit">
    <text evidence="4">Monomer or homodimer.</text>
</comment>
<comment type="subcellular location">
    <subcellularLocation>
        <location evidence="7">Cytoplasm</location>
    </subcellularLocation>
</comment>
<comment type="tissue specificity">
    <text>Ubiquitously distributed in various tissues and leukocytes, the kidney and liver had the highest enzyme activities.</text>
</comment>
<comment type="similarity">
    <text evidence="12">Belongs to the NADP-dependent oxidoreductase L4BD family.</text>
</comment>
<accession>Q29073</accession>
<accession>O62642</accession>
<protein>
    <recommendedName>
        <fullName>Prostaglandin reductase 1</fullName>
        <shortName>PRG-1</shortName>
    </recommendedName>
    <alternativeName>
        <fullName evidence="11">15-oxoprostaglandin 13-reductase</fullName>
        <ecNumber evidence="9">1.3.1.48</ecNumber>
    </alternativeName>
    <alternativeName>
        <fullName evidence="1">Dithiolethione-inducible gene 1 protein</fullName>
        <shortName evidence="1">D3T-inducible gene 1 protein</shortName>
        <shortName evidence="1">DIG-1</shortName>
    </alternativeName>
    <alternativeName>
        <fullName evidence="10">Leukotriene B4 12-hydroxydehydrogenase</fullName>
    </alternativeName>
    <alternativeName>
        <fullName>NAD(P)H-dependent alkenal/one oxidoreductase</fullName>
        <ecNumber evidence="2">1.3.1.74</ecNumber>
    </alternativeName>
</protein>